<proteinExistence type="inferred from homology"/>
<evidence type="ECO:0000255" key="1">
    <source>
        <dbReference type="HAMAP-Rule" id="MF_00056"/>
    </source>
</evidence>
<protein>
    <recommendedName>
        <fullName evidence="1">2-dehydro-3-deoxyphosphooctonate aldolase</fullName>
        <ecNumber evidence="1">2.5.1.55</ecNumber>
    </recommendedName>
    <alternativeName>
        <fullName evidence="1">3-deoxy-D-manno-octulosonic acid 8-phosphate synthase</fullName>
    </alternativeName>
    <alternativeName>
        <fullName evidence="1">KDO-8-phosphate synthase</fullName>
        <shortName evidence="1">KDO 8-P synthase</shortName>
        <shortName evidence="1">KDOPS</shortName>
    </alternativeName>
    <alternativeName>
        <fullName evidence="1">Phospho-2-dehydro-3-deoxyoctonate aldolase</fullName>
    </alternativeName>
</protein>
<reference key="1">
    <citation type="submission" date="2007-09" db="EMBL/GenBank/DDBJ databases">
        <title>Complete sequence of chromosome of Serratia proteamaculans 568.</title>
        <authorList>
            <consortium name="US DOE Joint Genome Institute"/>
            <person name="Copeland A."/>
            <person name="Lucas S."/>
            <person name="Lapidus A."/>
            <person name="Barry K."/>
            <person name="Glavina del Rio T."/>
            <person name="Dalin E."/>
            <person name="Tice H."/>
            <person name="Pitluck S."/>
            <person name="Chain P."/>
            <person name="Malfatti S."/>
            <person name="Shin M."/>
            <person name="Vergez L."/>
            <person name="Schmutz J."/>
            <person name="Larimer F."/>
            <person name="Land M."/>
            <person name="Hauser L."/>
            <person name="Kyrpides N."/>
            <person name="Kim E."/>
            <person name="Taghavi S."/>
            <person name="Newman L."/>
            <person name="Vangronsveld J."/>
            <person name="van der Lelie D."/>
            <person name="Richardson P."/>
        </authorList>
    </citation>
    <scope>NUCLEOTIDE SEQUENCE [LARGE SCALE GENOMIC DNA]</scope>
    <source>
        <strain>568</strain>
    </source>
</reference>
<feature type="chain" id="PRO_1000057398" description="2-dehydro-3-deoxyphosphooctonate aldolase">
    <location>
        <begin position="1"/>
        <end position="284"/>
    </location>
</feature>
<dbReference type="EC" id="2.5.1.55" evidence="1"/>
<dbReference type="EMBL" id="CP000826">
    <property type="protein sequence ID" value="ABV41097.1"/>
    <property type="molecule type" value="Genomic_DNA"/>
</dbReference>
<dbReference type="SMR" id="A8GDA7"/>
<dbReference type="STRING" id="399741.Spro_1994"/>
<dbReference type="KEGG" id="spe:Spro_1994"/>
<dbReference type="eggNOG" id="COG2877">
    <property type="taxonomic scope" value="Bacteria"/>
</dbReference>
<dbReference type="HOGENOM" id="CLU_036666_0_0_6"/>
<dbReference type="OrthoDB" id="9776934at2"/>
<dbReference type="UniPathway" id="UPA00030"/>
<dbReference type="UniPathway" id="UPA00357">
    <property type="reaction ID" value="UER00474"/>
</dbReference>
<dbReference type="GO" id="GO:0005737">
    <property type="term" value="C:cytoplasm"/>
    <property type="evidence" value="ECO:0007669"/>
    <property type="project" value="UniProtKB-SubCell"/>
</dbReference>
<dbReference type="GO" id="GO:0008676">
    <property type="term" value="F:3-deoxy-8-phosphooctulonate synthase activity"/>
    <property type="evidence" value="ECO:0007669"/>
    <property type="project" value="UniProtKB-UniRule"/>
</dbReference>
<dbReference type="GO" id="GO:0019294">
    <property type="term" value="P:keto-3-deoxy-D-manno-octulosonic acid biosynthetic process"/>
    <property type="evidence" value="ECO:0007669"/>
    <property type="project" value="UniProtKB-UniRule"/>
</dbReference>
<dbReference type="FunFam" id="3.20.20.70:FF:000058">
    <property type="entry name" value="2-dehydro-3-deoxyphosphooctonate aldolase"/>
    <property type="match status" value="1"/>
</dbReference>
<dbReference type="Gene3D" id="3.20.20.70">
    <property type="entry name" value="Aldolase class I"/>
    <property type="match status" value="1"/>
</dbReference>
<dbReference type="HAMAP" id="MF_00056">
    <property type="entry name" value="KDO8P_synth"/>
    <property type="match status" value="1"/>
</dbReference>
<dbReference type="InterPro" id="IPR013785">
    <property type="entry name" value="Aldolase_TIM"/>
</dbReference>
<dbReference type="InterPro" id="IPR006218">
    <property type="entry name" value="DAHP1/KDSA"/>
</dbReference>
<dbReference type="InterPro" id="IPR006269">
    <property type="entry name" value="KDO8P_synthase"/>
</dbReference>
<dbReference type="NCBIfam" id="TIGR01362">
    <property type="entry name" value="KDO8P_synth"/>
    <property type="match status" value="1"/>
</dbReference>
<dbReference type="NCBIfam" id="NF003543">
    <property type="entry name" value="PRK05198.1"/>
    <property type="match status" value="1"/>
</dbReference>
<dbReference type="NCBIfam" id="NF009109">
    <property type="entry name" value="PRK12457.1"/>
    <property type="match status" value="1"/>
</dbReference>
<dbReference type="PANTHER" id="PTHR21057">
    <property type="entry name" value="PHOSPHO-2-DEHYDRO-3-DEOXYHEPTONATE ALDOLASE"/>
    <property type="match status" value="1"/>
</dbReference>
<dbReference type="Pfam" id="PF00793">
    <property type="entry name" value="DAHP_synth_1"/>
    <property type="match status" value="1"/>
</dbReference>
<dbReference type="SUPFAM" id="SSF51569">
    <property type="entry name" value="Aldolase"/>
    <property type="match status" value="1"/>
</dbReference>
<accession>A8GDA7</accession>
<organism>
    <name type="scientific">Serratia proteamaculans (strain 568)</name>
    <dbReference type="NCBI Taxonomy" id="399741"/>
    <lineage>
        <taxon>Bacteria</taxon>
        <taxon>Pseudomonadati</taxon>
        <taxon>Pseudomonadota</taxon>
        <taxon>Gammaproteobacteria</taxon>
        <taxon>Enterobacterales</taxon>
        <taxon>Yersiniaceae</taxon>
        <taxon>Serratia</taxon>
    </lineage>
</organism>
<gene>
    <name evidence="1" type="primary">kdsA</name>
    <name type="ordered locus">Spro_1994</name>
</gene>
<comment type="catalytic activity">
    <reaction evidence="1">
        <text>D-arabinose 5-phosphate + phosphoenolpyruvate + H2O = 3-deoxy-alpha-D-manno-2-octulosonate-8-phosphate + phosphate</text>
        <dbReference type="Rhea" id="RHEA:14053"/>
        <dbReference type="ChEBI" id="CHEBI:15377"/>
        <dbReference type="ChEBI" id="CHEBI:43474"/>
        <dbReference type="ChEBI" id="CHEBI:57693"/>
        <dbReference type="ChEBI" id="CHEBI:58702"/>
        <dbReference type="ChEBI" id="CHEBI:85985"/>
        <dbReference type="EC" id="2.5.1.55"/>
    </reaction>
</comment>
<comment type="pathway">
    <text evidence="1">Carbohydrate biosynthesis; 3-deoxy-D-manno-octulosonate biosynthesis; 3-deoxy-D-manno-octulosonate from D-ribulose 5-phosphate: step 2/3.</text>
</comment>
<comment type="pathway">
    <text evidence="1">Bacterial outer membrane biogenesis; lipopolysaccharide biosynthesis.</text>
</comment>
<comment type="subcellular location">
    <subcellularLocation>
        <location evidence="1">Cytoplasm</location>
    </subcellularLocation>
</comment>
<comment type="similarity">
    <text evidence="1">Belongs to the KdsA family.</text>
</comment>
<sequence>MKQKVVSIGDINVANDLPFVLFGGMNVLESRDLAMRICEHYVTVTQKLGIPYVFKASFDKANRSSIHSYRGPGLEEGMKIFEEIKKTFGVKTITDVHEASQAQPVSEVVDVIQLPAFLARQTDLVEAMAKTGAVINVKKPQFVSPGQMGNIVDKFKEGGNDQVILCDRGSNFGYDNLVVDMLGINVMKNATGGHPVIFDVTHALQTRDPFGAASGGRRAQVAELARAGMAVGLAGLFIEAHPEPNSAKCDGPSALPLDKLEPFLVQMKAIDDLVKSFPELDTSN</sequence>
<name>KDSA_SERP5</name>
<keyword id="KW-0963">Cytoplasm</keyword>
<keyword id="KW-0448">Lipopolysaccharide biosynthesis</keyword>
<keyword id="KW-0808">Transferase</keyword>